<reference key="1">
    <citation type="journal article" date="1995" name="Science">
        <title>Whole-genome random sequencing and assembly of Haemophilus influenzae Rd.</title>
        <authorList>
            <person name="Fleischmann R.D."/>
            <person name="Adams M.D."/>
            <person name="White O."/>
            <person name="Clayton R.A."/>
            <person name="Kirkness E.F."/>
            <person name="Kerlavage A.R."/>
            <person name="Bult C.J."/>
            <person name="Tomb J.-F."/>
            <person name="Dougherty B.A."/>
            <person name="Merrick J.M."/>
            <person name="McKenney K."/>
            <person name="Sutton G.G."/>
            <person name="FitzHugh W."/>
            <person name="Fields C.A."/>
            <person name="Gocayne J.D."/>
            <person name="Scott J.D."/>
            <person name="Shirley R."/>
            <person name="Liu L.-I."/>
            <person name="Glodek A."/>
            <person name="Kelley J.M."/>
            <person name="Weidman J.F."/>
            <person name="Phillips C.A."/>
            <person name="Spriggs T."/>
            <person name="Hedblom E."/>
            <person name="Cotton M.D."/>
            <person name="Utterback T.R."/>
            <person name="Hanna M.C."/>
            <person name="Nguyen D.T."/>
            <person name="Saudek D.M."/>
            <person name="Brandon R.C."/>
            <person name="Fine L.D."/>
            <person name="Fritchman J.L."/>
            <person name="Fuhrmann J.L."/>
            <person name="Geoghagen N.S.M."/>
            <person name="Gnehm C.L."/>
            <person name="McDonald L.A."/>
            <person name="Small K.V."/>
            <person name="Fraser C.M."/>
            <person name="Smith H.O."/>
            <person name="Venter J.C."/>
        </authorList>
    </citation>
    <scope>NUCLEOTIDE SEQUENCE [LARGE SCALE GENOMIC DNA]</scope>
    <source>
        <strain>ATCC 51907 / DSM 11121 / KW20 / Rd</strain>
    </source>
</reference>
<reference key="2">
    <citation type="journal article" date="2003" name="Antimicrob. Agents Chemother.">
        <title>Effects of an efflux mechanism and ribosomal mutations on macrolide susceptibility of Haemophilus influenzae clinical isolates.</title>
        <authorList>
            <person name="Peric M."/>
            <person name="Bozdogan B."/>
            <person name="Jacobs M.R."/>
            <person name="Appelbaum P.C."/>
        </authorList>
    </citation>
    <scope>MACROLIDE RESISTANT VARIANTS</scope>
    <source>
        <strain>S1</strain>
        <strain>S2</strain>
        <strain>S26</strain>
        <strain>S3</strain>
        <strain>S49</strain>
        <strain>S58</strain>
        <strain>S60</strain>
    </source>
</reference>
<keyword id="KW-0046">Antibiotic resistance</keyword>
<keyword id="KW-1185">Reference proteome</keyword>
<keyword id="KW-0687">Ribonucleoprotein</keyword>
<keyword id="KW-0689">Ribosomal protein</keyword>
<keyword id="KW-0694">RNA-binding</keyword>
<keyword id="KW-0699">rRNA-binding</keyword>
<accession>P44360</accession>
<name>RL22_HAEIN</name>
<comment type="function">
    <text evidence="1">This protein binds specifically to 23S rRNA; its binding is stimulated by other ribosomal proteins, e.g. L4, L17, and L20. It is important during the early stages of 50S assembly. It makes multiple contacts with different domains of the 23S rRNA in the assembled 50S subunit and ribosome (By similarity).</text>
</comment>
<comment type="function">
    <text evidence="1">The globular domain of the protein is located near the polypeptide exit tunnel on the outside of the subunit, while an extended beta-hairpin is found that lines the wall of the exit tunnel in the center of the 70S ribosome.</text>
</comment>
<comment type="subunit">
    <text evidence="1">Part of the 50S ribosomal subunit.</text>
</comment>
<comment type="similarity">
    <text evidence="2">Belongs to the universal ribosomal protein uL22 family.</text>
</comment>
<dbReference type="EMBL" id="L42023">
    <property type="protein sequence ID" value="AAC22441.1"/>
    <property type="molecule type" value="Genomic_DNA"/>
</dbReference>
<dbReference type="PIR" id="A64093">
    <property type="entry name" value="A64093"/>
</dbReference>
<dbReference type="RefSeq" id="NP_438941.1">
    <property type="nucleotide sequence ID" value="NC_000907.1"/>
</dbReference>
<dbReference type="SMR" id="P44360"/>
<dbReference type="STRING" id="71421.HI_0782"/>
<dbReference type="EnsemblBacteria" id="AAC22441">
    <property type="protein sequence ID" value="AAC22441"/>
    <property type="gene ID" value="HI_0782"/>
</dbReference>
<dbReference type="KEGG" id="hin:HI_0782"/>
<dbReference type="PATRIC" id="fig|71421.8.peg.821"/>
<dbReference type="eggNOG" id="COG0091">
    <property type="taxonomic scope" value="Bacteria"/>
</dbReference>
<dbReference type="HOGENOM" id="CLU_083987_3_3_6"/>
<dbReference type="OrthoDB" id="9805969at2"/>
<dbReference type="PhylomeDB" id="P44360"/>
<dbReference type="BioCyc" id="HINF71421:G1GJ1-822-MONOMER"/>
<dbReference type="PRO" id="PR:P44360"/>
<dbReference type="Proteomes" id="UP000000579">
    <property type="component" value="Chromosome"/>
</dbReference>
<dbReference type="GO" id="GO:0022625">
    <property type="term" value="C:cytosolic large ribosomal subunit"/>
    <property type="evidence" value="ECO:0000318"/>
    <property type="project" value="GO_Central"/>
</dbReference>
<dbReference type="GO" id="GO:0019843">
    <property type="term" value="F:rRNA binding"/>
    <property type="evidence" value="ECO:0007669"/>
    <property type="project" value="UniProtKB-UniRule"/>
</dbReference>
<dbReference type="GO" id="GO:0003735">
    <property type="term" value="F:structural constituent of ribosome"/>
    <property type="evidence" value="ECO:0000318"/>
    <property type="project" value="GO_Central"/>
</dbReference>
<dbReference type="GO" id="GO:0046677">
    <property type="term" value="P:response to antibiotic"/>
    <property type="evidence" value="ECO:0007669"/>
    <property type="project" value="UniProtKB-KW"/>
</dbReference>
<dbReference type="GO" id="GO:0006412">
    <property type="term" value="P:translation"/>
    <property type="evidence" value="ECO:0000318"/>
    <property type="project" value="GO_Central"/>
</dbReference>
<dbReference type="CDD" id="cd00336">
    <property type="entry name" value="Ribosomal_L22"/>
    <property type="match status" value="1"/>
</dbReference>
<dbReference type="FunFam" id="3.90.470.10:FF:000001">
    <property type="entry name" value="50S ribosomal protein L22"/>
    <property type="match status" value="1"/>
</dbReference>
<dbReference type="Gene3D" id="3.90.470.10">
    <property type="entry name" value="Ribosomal protein L22/L17"/>
    <property type="match status" value="1"/>
</dbReference>
<dbReference type="HAMAP" id="MF_01331_B">
    <property type="entry name" value="Ribosomal_uL22_B"/>
    <property type="match status" value="1"/>
</dbReference>
<dbReference type="InterPro" id="IPR001063">
    <property type="entry name" value="Ribosomal_uL22"/>
</dbReference>
<dbReference type="InterPro" id="IPR005727">
    <property type="entry name" value="Ribosomal_uL22_bac/chlpt-type"/>
</dbReference>
<dbReference type="InterPro" id="IPR047867">
    <property type="entry name" value="Ribosomal_uL22_bac/org-type"/>
</dbReference>
<dbReference type="InterPro" id="IPR018260">
    <property type="entry name" value="Ribosomal_uL22_CS"/>
</dbReference>
<dbReference type="InterPro" id="IPR036394">
    <property type="entry name" value="Ribosomal_uL22_sf"/>
</dbReference>
<dbReference type="NCBIfam" id="TIGR01044">
    <property type="entry name" value="rplV_bact"/>
    <property type="match status" value="1"/>
</dbReference>
<dbReference type="PANTHER" id="PTHR13501">
    <property type="entry name" value="CHLOROPLAST 50S RIBOSOMAL PROTEIN L22-RELATED"/>
    <property type="match status" value="1"/>
</dbReference>
<dbReference type="PANTHER" id="PTHR13501:SF8">
    <property type="entry name" value="LARGE RIBOSOMAL SUBUNIT PROTEIN UL22M"/>
    <property type="match status" value="1"/>
</dbReference>
<dbReference type="Pfam" id="PF00237">
    <property type="entry name" value="Ribosomal_L22"/>
    <property type="match status" value="1"/>
</dbReference>
<dbReference type="SUPFAM" id="SSF54843">
    <property type="entry name" value="Ribosomal protein L22"/>
    <property type="match status" value="1"/>
</dbReference>
<dbReference type="PROSITE" id="PS00464">
    <property type="entry name" value="RIBOSOMAL_L22"/>
    <property type="match status" value="1"/>
</dbReference>
<sequence length="110" mass="12148">METIAKHRYARTSAQKARLVADLIRGKKVAQALEILTFTNKKAAALVKKVLESAIANAEHNDGADIDDLKVAKIFVDEGPSMKRVMPRAKGRADRILKRTSHITVVVSDR</sequence>
<proteinExistence type="inferred from homology"/>
<protein>
    <recommendedName>
        <fullName evidence="2">Large ribosomal subunit protein uL22</fullName>
    </recommendedName>
    <alternativeName>
        <fullName>50S ribosomal protein L22</fullName>
    </alternativeName>
</protein>
<gene>
    <name type="primary">rplV</name>
    <name type="synonym">rpl22</name>
    <name type="ordered locus">HI_0782</name>
</gene>
<feature type="chain" id="PRO_0000125161" description="Large ribosomal subunit protein uL22">
    <location>
        <begin position="1"/>
        <end position="110"/>
    </location>
</feature>
<feature type="sequence variant" description="In strain: S1; confers macrolide resistance.">
    <original>D</original>
    <variation>DDEGPSM</variation>
    <location>
        <position position="77"/>
    </location>
</feature>
<feature type="sequence variant" description="In strain: S42; confers macrolide resistance.">
    <location>
        <position position="81"/>
    </location>
</feature>
<feature type="sequence variant" description="In strain: S53; confers macrolide resistance.">
    <location>
        <position position="82"/>
    </location>
</feature>
<feature type="sequence variant" description="In strain: S26; confers macrolide resistance.">
    <original>R</original>
    <variation>RRAKG</variation>
    <location>
        <position position="88"/>
    </location>
</feature>
<feature type="sequence variant" description="In strain: S2 and S3; confers macrolide resistance.">
    <original>G</original>
    <variation>D</variation>
    <location>
        <position position="91"/>
    </location>
</feature>
<feature type="sequence variant" description="In strain: S49; confers macrolide resistance.">
    <original>G</original>
    <variation>GKG</variation>
    <location>
        <position position="91"/>
    </location>
</feature>
<feature type="sequence variant" description="In strain: S60; confers macrolide resistance.">
    <original>G</original>
    <variation>GRADR</variation>
    <location>
        <position position="91"/>
    </location>
</feature>
<feature type="sequence variant" description="In strain: S58; confers macrolide resistance.">
    <original>G</original>
    <variation>GRAG</variation>
    <location>
        <position position="91"/>
    </location>
</feature>
<feature type="sequence variant" description="In strain: S40; confers macrolide resistance.">
    <location>
        <begin position="95"/>
        <end position="96"/>
    </location>
</feature>
<feature type="sequence variant" description="In strain: S23; confers macrolide resistance.">
    <location>
        <begin position="96"/>
        <end position="98"/>
    </location>
</feature>
<evidence type="ECO:0000250" key="1"/>
<evidence type="ECO:0000305" key="2"/>
<organism>
    <name type="scientific">Haemophilus influenzae (strain ATCC 51907 / DSM 11121 / KW20 / Rd)</name>
    <dbReference type="NCBI Taxonomy" id="71421"/>
    <lineage>
        <taxon>Bacteria</taxon>
        <taxon>Pseudomonadati</taxon>
        <taxon>Pseudomonadota</taxon>
        <taxon>Gammaproteobacteria</taxon>
        <taxon>Pasteurellales</taxon>
        <taxon>Pasteurellaceae</taxon>
        <taxon>Haemophilus</taxon>
    </lineage>
</organism>